<proteinExistence type="inferred from homology"/>
<sequence>MARKALIEKWKKTPKYATKAYTRCRICGRPHAVLKKYGICRICFRELAYKGEIPGCKKASW</sequence>
<keyword id="KW-0479">Metal-binding</keyword>
<keyword id="KW-0687">Ribonucleoprotein</keyword>
<keyword id="KW-0689">Ribosomal protein</keyword>
<keyword id="KW-0694">RNA-binding</keyword>
<keyword id="KW-0699">rRNA-binding</keyword>
<keyword id="KW-0862">Zinc</keyword>
<protein>
    <recommendedName>
        <fullName evidence="1">Small ribosomal subunit protein uS14</fullName>
    </recommendedName>
    <alternativeName>
        <fullName evidence="2">30S ribosomal protein S14 type Z</fullName>
    </alternativeName>
</protein>
<reference key="1">
    <citation type="submission" date="2005-09" db="EMBL/GenBank/DDBJ databases">
        <title>Complete genome sequence of Clostridium kluyveri and comparative genomics of Clostridia species.</title>
        <authorList>
            <person name="Inui M."/>
            <person name="Nonaka H."/>
            <person name="Shinoda Y."/>
            <person name="Ikenaga Y."/>
            <person name="Abe M."/>
            <person name="Naito K."/>
            <person name="Vertes A.A."/>
            <person name="Yukawa H."/>
        </authorList>
    </citation>
    <scope>NUCLEOTIDE SEQUENCE [LARGE SCALE GENOMIC DNA]</scope>
    <source>
        <strain>NBRC 12016</strain>
    </source>
</reference>
<gene>
    <name evidence="1" type="primary">rpsZ</name>
    <name evidence="1" type="synonym">rpsN</name>
    <name type="ordered locus">CKR_0196</name>
</gene>
<name>RS14Z_CLOK1</name>
<feature type="chain" id="PRO_1000166766" description="Small ribosomal subunit protein uS14">
    <location>
        <begin position="1"/>
        <end position="61"/>
    </location>
</feature>
<feature type="binding site" evidence="1">
    <location>
        <position position="24"/>
    </location>
    <ligand>
        <name>Zn(2+)</name>
        <dbReference type="ChEBI" id="CHEBI:29105"/>
    </ligand>
</feature>
<feature type="binding site" evidence="1">
    <location>
        <position position="27"/>
    </location>
    <ligand>
        <name>Zn(2+)</name>
        <dbReference type="ChEBI" id="CHEBI:29105"/>
    </ligand>
</feature>
<feature type="binding site" evidence="1">
    <location>
        <position position="40"/>
    </location>
    <ligand>
        <name>Zn(2+)</name>
        <dbReference type="ChEBI" id="CHEBI:29105"/>
    </ligand>
</feature>
<feature type="binding site" evidence="1">
    <location>
        <position position="43"/>
    </location>
    <ligand>
        <name>Zn(2+)</name>
        <dbReference type="ChEBI" id="CHEBI:29105"/>
    </ligand>
</feature>
<organism>
    <name type="scientific">Clostridium kluyveri (strain NBRC 12016)</name>
    <dbReference type="NCBI Taxonomy" id="583346"/>
    <lineage>
        <taxon>Bacteria</taxon>
        <taxon>Bacillati</taxon>
        <taxon>Bacillota</taxon>
        <taxon>Clostridia</taxon>
        <taxon>Eubacteriales</taxon>
        <taxon>Clostridiaceae</taxon>
        <taxon>Clostridium</taxon>
    </lineage>
</organism>
<evidence type="ECO:0000255" key="1">
    <source>
        <dbReference type="HAMAP-Rule" id="MF_01364"/>
    </source>
</evidence>
<evidence type="ECO:0000305" key="2"/>
<comment type="function">
    <text evidence="1">Binds 16S rRNA, required for the assembly of 30S particles and may also be responsible for determining the conformation of the 16S rRNA at the A site.</text>
</comment>
<comment type="cofactor">
    <cofactor evidence="1">
        <name>Zn(2+)</name>
        <dbReference type="ChEBI" id="CHEBI:29105"/>
    </cofactor>
    <text evidence="1">Binds 1 zinc ion per subunit.</text>
</comment>
<comment type="subunit">
    <text evidence="1">Part of the 30S ribosomal subunit. Contacts proteins S3 and S10.</text>
</comment>
<comment type="similarity">
    <text evidence="1">Belongs to the universal ribosomal protein uS14 family. Zinc-binding uS14 subfamily.</text>
</comment>
<dbReference type="EMBL" id="AP009049">
    <property type="protein sequence ID" value="BAH05247.1"/>
    <property type="molecule type" value="Genomic_DNA"/>
</dbReference>
<dbReference type="RefSeq" id="WP_011988816.1">
    <property type="nucleotide sequence ID" value="NC_011837.1"/>
</dbReference>
<dbReference type="SMR" id="B9DYC2"/>
<dbReference type="KEGG" id="ckr:CKR_0196"/>
<dbReference type="HOGENOM" id="CLU_139869_3_0_9"/>
<dbReference type="Proteomes" id="UP000007969">
    <property type="component" value="Chromosome"/>
</dbReference>
<dbReference type="GO" id="GO:0005737">
    <property type="term" value="C:cytoplasm"/>
    <property type="evidence" value="ECO:0007669"/>
    <property type="project" value="UniProtKB-ARBA"/>
</dbReference>
<dbReference type="GO" id="GO:0015935">
    <property type="term" value="C:small ribosomal subunit"/>
    <property type="evidence" value="ECO:0007669"/>
    <property type="project" value="TreeGrafter"/>
</dbReference>
<dbReference type="GO" id="GO:0019843">
    <property type="term" value="F:rRNA binding"/>
    <property type="evidence" value="ECO:0007669"/>
    <property type="project" value="UniProtKB-UniRule"/>
</dbReference>
<dbReference type="GO" id="GO:0003735">
    <property type="term" value="F:structural constituent of ribosome"/>
    <property type="evidence" value="ECO:0007669"/>
    <property type="project" value="InterPro"/>
</dbReference>
<dbReference type="GO" id="GO:0008270">
    <property type="term" value="F:zinc ion binding"/>
    <property type="evidence" value="ECO:0007669"/>
    <property type="project" value="UniProtKB-UniRule"/>
</dbReference>
<dbReference type="GO" id="GO:0006412">
    <property type="term" value="P:translation"/>
    <property type="evidence" value="ECO:0007669"/>
    <property type="project" value="UniProtKB-UniRule"/>
</dbReference>
<dbReference type="FunFam" id="4.10.830.10:FF:000001">
    <property type="entry name" value="30S ribosomal protein S14 type Z"/>
    <property type="match status" value="1"/>
</dbReference>
<dbReference type="Gene3D" id="4.10.830.10">
    <property type="entry name" value="30s Ribosomal Protein S14, Chain N"/>
    <property type="match status" value="1"/>
</dbReference>
<dbReference type="HAMAP" id="MF_01364_B">
    <property type="entry name" value="Ribosomal_uS14_2_B"/>
    <property type="match status" value="1"/>
</dbReference>
<dbReference type="InterPro" id="IPR001209">
    <property type="entry name" value="Ribosomal_uS14"/>
</dbReference>
<dbReference type="InterPro" id="IPR023053">
    <property type="entry name" value="Ribosomal_uS14_bact"/>
</dbReference>
<dbReference type="InterPro" id="IPR043140">
    <property type="entry name" value="Ribosomal_uS14_sf"/>
</dbReference>
<dbReference type="NCBIfam" id="NF005974">
    <property type="entry name" value="PRK08061.1"/>
    <property type="match status" value="1"/>
</dbReference>
<dbReference type="PANTHER" id="PTHR19836">
    <property type="entry name" value="30S RIBOSOMAL PROTEIN S14"/>
    <property type="match status" value="1"/>
</dbReference>
<dbReference type="PANTHER" id="PTHR19836:SF19">
    <property type="entry name" value="SMALL RIBOSOMAL SUBUNIT PROTEIN US14M"/>
    <property type="match status" value="1"/>
</dbReference>
<dbReference type="Pfam" id="PF00253">
    <property type="entry name" value="Ribosomal_S14"/>
    <property type="match status" value="1"/>
</dbReference>
<dbReference type="SUPFAM" id="SSF57716">
    <property type="entry name" value="Glucocorticoid receptor-like (DNA-binding domain)"/>
    <property type="match status" value="1"/>
</dbReference>
<accession>B9DYC2</accession>